<reference key="1">
    <citation type="submission" date="2007-03" db="EMBL/GenBank/DDBJ databases">
        <title>Complete sequence of Prosthecochloris vibrioformis DSM 265.</title>
        <authorList>
            <consortium name="US DOE Joint Genome Institute"/>
            <person name="Copeland A."/>
            <person name="Lucas S."/>
            <person name="Lapidus A."/>
            <person name="Barry K."/>
            <person name="Detter J.C."/>
            <person name="Glavina del Rio T."/>
            <person name="Hammon N."/>
            <person name="Israni S."/>
            <person name="Pitluck S."/>
            <person name="Schmutz J."/>
            <person name="Larimer F."/>
            <person name="Land M."/>
            <person name="Hauser L."/>
            <person name="Mikhailova N."/>
            <person name="Li T."/>
            <person name="Overmann J."/>
            <person name="Schuster S.C."/>
            <person name="Bryant D.A."/>
            <person name="Richardson P."/>
        </authorList>
    </citation>
    <scope>NUCLEOTIDE SEQUENCE [LARGE SCALE GENOMIC DNA]</scope>
    <source>
        <strain>DSM 265 / 1930</strain>
    </source>
</reference>
<keyword id="KW-0694">RNA-binding</keyword>
<keyword id="KW-0804">Transcription</keyword>
<keyword id="KW-0889">Transcription antitermination</keyword>
<keyword id="KW-0805">Transcription regulation</keyword>
<organism>
    <name type="scientific">Chlorobium phaeovibrioides (strain DSM 265 / 1930)</name>
    <name type="common">Prosthecochloris vibrioformis (strain DSM 265)</name>
    <dbReference type="NCBI Taxonomy" id="290318"/>
    <lineage>
        <taxon>Bacteria</taxon>
        <taxon>Pseudomonadati</taxon>
        <taxon>Chlorobiota</taxon>
        <taxon>Chlorobiia</taxon>
        <taxon>Chlorobiales</taxon>
        <taxon>Chlorobiaceae</taxon>
        <taxon>Chlorobium/Pelodictyon group</taxon>
        <taxon>Chlorobium</taxon>
    </lineage>
</organism>
<feature type="chain" id="PRO_1000075195" description="Transcription antitermination protein NusB">
    <location>
        <begin position="1"/>
        <end position="164"/>
    </location>
</feature>
<feature type="region of interest" description="Disordered" evidence="2">
    <location>
        <begin position="144"/>
        <end position="164"/>
    </location>
</feature>
<feature type="compositionally biased region" description="Basic and acidic residues" evidence="2">
    <location>
        <begin position="149"/>
        <end position="164"/>
    </location>
</feature>
<comment type="function">
    <text evidence="1">Involved in transcription antitermination. Required for transcription of ribosomal RNA (rRNA) genes. Binds specifically to the boxA antiterminator sequence of the ribosomal RNA (rrn) operons.</text>
</comment>
<comment type="similarity">
    <text evidence="1">Belongs to the NusB family.</text>
</comment>
<gene>
    <name evidence="1" type="primary">nusB</name>
    <name type="ordered locus">Cvib_1464</name>
</gene>
<accession>A4SG66</accession>
<evidence type="ECO:0000255" key="1">
    <source>
        <dbReference type="HAMAP-Rule" id="MF_00073"/>
    </source>
</evidence>
<evidence type="ECO:0000256" key="2">
    <source>
        <dbReference type="SAM" id="MobiDB-lite"/>
    </source>
</evidence>
<protein>
    <recommendedName>
        <fullName evidence="1">Transcription antitermination protein NusB</fullName>
    </recommendedName>
    <alternativeName>
        <fullName evidence="1">Antitermination factor NusB</fullName>
    </alternativeName>
</protein>
<proteinExistence type="inferred from homology"/>
<name>NUSB_CHLPM</name>
<sequence length="164" mass="18682">MKTYRRQIREKILQALYTLELRDTDIDSAAGWLLTPEILADPKAMKFFNLLLGNIKEHMEEIDRYIAAHTFNWDMSRIAIIDKNILRMAMAELLYCDDIPPKVSINEAIEIAKKFSSTDKSSKFVNGILDAIFNALKEEGKINKNGRGLIDHTPPRAAKTDAKS</sequence>
<dbReference type="EMBL" id="CP000607">
    <property type="protein sequence ID" value="ABP37475.1"/>
    <property type="molecule type" value="Genomic_DNA"/>
</dbReference>
<dbReference type="SMR" id="A4SG66"/>
<dbReference type="STRING" id="290318.Cvib_1464"/>
<dbReference type="KEGG" id="pvi:Cvib_1464"/>
<dbReference type="eggNOG" id="COG0781">
    <property type="taxonomic scope" value="Bacteria"/>
</dbReference>
<dbReference type="HOGENOM" id="CLU_087843_3_0_10"/>
<dbReference type="OrthoDB" id="9787568at2"/>
<dbReference type="GO" id="GO:0005829">
    <property type="term" value="C:cytosol"/>
    <property type="evidence" value="ECO:0007669"/>
    <property type="project" value="TreeGrafter"/>
</dbReference>
<dbReference type="GO" id="GO:0003723">
    <property type="term" value="F:RNA binding"/>
    <property type="evidence" value="ECO:0007669"/>
    <property type="project" value="UniProtKB-UniRule"/>
</dbReference>
<dbReference type="GO" id="GO:0006353">
    <property type="term" value="P:DNA-templated transcription termination"/>
    <property type="evidence" value="ECO:0007669"/>
    <property type="project" value="UniProtKB-UniRule"/>
</dbReference>
<dbReference type="GO" id="GO:0031564">
    <property type="term" value="P:transcription antitermination"/>
    <property type="evidence" value="ECO:0007669"/>
    <property type="project" value="UniProtKB-KW"/>
</dbReference>
<dbReference type="CDD" id="cd00619">
    <property type="entry name" value="Terminator_NusB"/>
    <property type="match status" value="1"/>
</dbReference>
<dbReference type="Gene3D" id="1.10.940.10">
    <property type="entry name" value="NusB-like"/>
    <property type="match status" value="1"/>
</dbReference>
<dbReference type="HAMAP" id="MF_00073">
    <property type="entry name" value="NusB"/>
    <property type="match status" value="1"/>
</dbReference>
<dbReference type="InterPro" id="IPR035926">
    <property type="entry name" value="NusB-like_sf"/>
</dbReference>
<dbReference type="InterPro" id="IPR011605">
    <property type="entry name" value="NusB_fam"/>
</dbReference>
<dbReference type="InterPro" id="IPR006027">
    <property type="entry name" value="NusB_RsmB_TIM44"/>
</dbReference>
<dbReference type="NCBIfam" id="TIGR01951">
    <property type="entry name" value="nusB"/>
    <property type="match status" value="1"/>
</dbReference>
<dbReference type="PANTHER" id="PTHR11078:SF3">
    <property type="entry name" value="ANTITERMINATION NUSB DOMAIN-CONTAINING PROTEIN"/>
    <property type="match status" value="1"/>
</dbReference>
<dbReference type="PANTHER" id="PTHR11078">
    <property type="entry name" value="N UTILIZATION SUBSTANCE PROTEIN B-RELATED"/>
    <property type="match status" value="1"/>
</dbReference>
<dbReference type="Pfam" id="PF01029">
    <property type="entry name" value="NusB"/>
    <property type="match status" value="1"/>
</dbReference>
<dbReference type="SUPFAM" id="SSF48013">
    <property type="entry name" value="NusB-like"/>
    <property type="match status" value="1"/>
</dbReference>